<feature type="chain" id="PRO_0000256625" description="Trigger factor">
    <location>
        <begin position="1"/>
        <end position="436"/>
    </location>
</feature>
<feature type="domain" description="PPIase FKBP-type" evidence="1">
    <location>
        <begin position="163"/>
        <end position="248"/>
    </location>
</feature>
<sequence>MTATWEKKEGNEGVLSVTVPAEKVDKAIDQAFKKVVKQINVPGFRKGKVPRPIFEQRFGVEALYQDAVDILLPEAYGEAIDETGIKPVDQPEINVTSIEKGKEMTFEANVVVEPEVQLGDYKGLEVEKQDVELTDEELQESIDHQLGHLAEMVVKEDGAIENGDTVNIDFDGYVDGEQFEGGQAEGYDLEIGSGSFIPGFEEQLVGVKTGEEKDVNVTFPEEYHAEELAGKEATFKTKVNEIKYKDVPELTDEIANELDSEANTVDEYKENLRKRLTEQKETDAENNQKEEAINKAANNASIDVPDAMINTELDRMVQEFGQRMQQQGLNLETYFQISGQDESQLREQMKDDAEERVKTNLTLTAIADAEDIEVSDDDIDKELEKMSEQFNISVEDIKQTLGNTDIVKNDVRIQKVIDLLVDEAKLVEPSKDDSEA</sequence>
<reference key="1">
    <citation type="journal article" date="2005" name="Proc. Natl. Acad. Sci. U.S.A.">
        <title>Whole genome sequence of Staphylococcus saprophyticus reveals the pathogenesis of uncomplicated urinary tract infection.</title>
        <authorList>
            <person name="Kuroda M."/>
            <person name="Yamashita A."/>
            <person name="Hirakawa H."/>
            <person name="Kumano M."/>
            <person name="Morikawa K."/>
            <person name="Higashide M."/>
            <person name="Maruyama A."/>
            <person name="Inose Y."/>
            <person name="Matoba K."/>
            <person name="Toh H."/>
            <person name="Kuhara S."/>
            <person name="Hattori M."/>
            <person name="Ohta T."/>
        </authorList>
    </citation>
    <scope>NUCLEOTIDE SEQUENCE [LARGE SCALE GENOMIC DNA]</scope>
    <source>
        <strain>ATCC 15305 / DSM 20229 / NCIMB 8711 / NCTC 7292 / S-41</strain>
    </source>
</reference>
<accession>Q49YA7</accession>
<name>TIG_STAS1</name>
<gene>
    <name evidence="1" type="primary">tig</name>
    <name type="ordered locus">SSP1089</name>
</gene>
<dbReference type="EC" id="5.2.1.8" evidence="1"/>
<dbReference type="EMBL" id="AP008934">
    <property type="protein sequence ID" value="BAE18234.1"/>
    <property type="molecule type" value="Genomic_DNA"/>
</dbReference>
<dbReference type="RefSeq" id="WP_002483068.1">
    <property type="nucleotide sequence ID" value="NZ_MTGA01000038.1"/>
</dbReference>
<dbReference type="SMR" id="Q49YA7"/>
<dbReference type="GeneID" id="66867322"/>
<dbReference type="KEGG" id="ssp:SSP1089"/>
<dbReference type="PATRIC" id="fig|342451.11.peg.1088"/>
<dbReference type="eggNOG" id="COG0544">
    <property type="taxonomic scope" value="Bacteria"/>
</dbReference>
<dbReference type="HOGENOM" id="CLU_033058_3_2_9"/>
<dbReference type="OrthoDB" id="9767721at2"/>
<dbReference type="Proteomes" id="UP000006371">
    <property type="component" value="Chromosome"/>
</dbReference>
<dbReference type="GO" id="GO:0005737">
    <property type="term" value="C:cytoplasm"/>
    <property type="evidence" value="ECO:0007669"/>
    <property type="project" value="UniProtKB-SubCell"/>
</dbReference>
<dbReference type="GO" id="GO:0003755">
    <property type="term" value="F:peptidyl-prolyl cis-trans isomerase activity"/>
    <property type="evidence" value="ECO:0007669"/>
    <property type="project" value="UniProtKB-UniRule"/>
</dbReference>
<dbReference type="GO" id="GO:0044183">
    <property type="term" value="F:protein folding chaperone"/>
    <property type="evidence" value="ECO:0007669"/>
    <property type="project" value="TreeGrafter"/>
</dbReference>
<dbReference type="GO" id="GO:0043022">
    <property type="term" value="F:ribosome binding"/>
    <property type="evidence" value="ECO:0007669"/>
    <property type="project" value="TreeGrafter"/>
</dbReference>
<dbReference type="GO" id="GO:0051083">
    <property type="term" value="P:'de novo' cotranslational protein folding"/>
    <property type="evidence" value="ECO:0007669"/>
    <property type="project" value="TreeGrafter"/>
</dbReference>
<dbReference type="GO" id="GO:0051301">
    <property type="term" value="P:cell division"/>
    <property type="evidence" value="ECO:0007669"/>
    <property type="project" value="UniProtKB-KW"/>
</dbReference>
<dbReference type="GO" id="GO:0061077">
    <property type="term" value="P:chaperone-mediated protein folding"/>
    <property type="evidence" value="ECO:0007669"/>
    <property type="project" value="TreeGrafter"/>
</dbReference>
<dbReference type="GO" id="GO:0015031">
    <property type="term" value="P:protein transport"/>
    <property type="evidence" value="ECO:0007669"/>
    <property type="project" value="UniProtKB-UniRule"/>
</dbReference>
<dbReference type="GO" id="GO:0043335">
    <property type="term" value="P:protein unfolding"/>
    <property type="evidence" value="ECO:0007669"/>
    <property type="project" value="TreeGrafter"/>
</dbReference>
<dbReference type="FunFam" id="3.10.50.40:FF:000001">
    <property type="entry name" value="Trigger factor"/>
    <property type="match status" value="1"/>
</dbReference>
<dbReference type="Gene3D" id="3.10.50.40">
    <property type="match status" value="1"/>
</dbReference>
<dbReference type="Gene3D" id="3.30.70.1050">
    <property type="entry name" value="Trigger factor ribosome-binding domain"/>
    <property type="match status" value="1"/>
</dbReference>
<dbReference type="Gene3D" id="1.10.3120.10">
    <property type="entry name" value="Trigger factor, C-terminal domain"/>
    <property type="match status" value="1"/>
</dbReference>
<dbReference type="HAMAP" id="MF_00303">
    <property type="entry name" value="Trigger_factor_Tig"/>
    <property type="match status" value="1"/>
</dbReference>
<dbReference type="InterPro" id="IPR046357">
    <property type="entry name" value="PPIase_dom_sf"/>
</dbReference>
<dbReference type="InterPro" id="IPR001179">
    <property type="entry name" value="PPIase_FKBP_dom"/>
</dbReference>
<dbReference type="InterPro" id="IPR005215">
    <property type="entry name" value="Trig_fac"/>
</dbReference>
<dbReference type="InterPro" id="IPR008880">
    <property type="entry name" value="Trigger_fac_C"/>
</dbReference>
<dbReference type="InterPro" id="IPR037041">
    <property type="entry name" value="Trigger_fac_C_sf"/>
</dbReference>
<dbReference type="InterPro" id="IPR008881">
    <property type="entry name" value="Trigger_fac_ribosome-bd_bac"/>
</dbReference>
<dbReference type="InterPro" id="IPR036611">
    <property type="entry name" value="Trigger_fac_ribosome-bd_sf"/>
</dbReference>
<dbReference type="InterPro" id="IPR027304">
    <property type="entry name" value="Trigger_fact/SurA_dom_sf"/>
</dbReference>
<dbReference type="NCBIfam" id="TIGR00115">
    <property type="entry name" value="tig"/>
    <property type="match status" value="1"/>
</dbReference>
<dbReference type="PANTHER" id="PTHR30560">
    <property type="entry name" value="TRIGGER FACTOR CHAPERONE AND PEPTIDYL-PROLYL CIS/TRANS ISOMERASE"/>
    <property type="match status" value="1"/>
</dbReference>
<dbReference type="PANTHER" id="PTHR30560:SF3">
    <property type="entry name" value="TRIGGER FACTOR-LIKE PROTEIN TIG, CHLOROPLASTIC"/>
    <property type="match status" value="1"/>
</dbReference>
<dbReference type="Pfam" id="PF00254">
    <property type="entry name" value="FKBP_C"/>
    <property type="match status" value="1"/>
</dbReference>
<dbReference type="Pfam" id="PF05698">
    <property type="entry name" value="Trigger_C"/>
    <property type="match status" value="1"/>
</dbReference>
<dbReference type="Pfam" id="PF05697">
    <property type="entry name" value="Trigger_N"/>
    <property type="match status" value="1"/>
</dbReference>
<dbReference type="PIRSF" id="PIRSF003095">
    <property type="entry name" value="Trigger_factor"/>
    <property type="match status" value="1"/>
</dbReference>
<dbReference type="SUPFAM" id="SSF54534">
    <property type="entry name" value="FKBP-like"/>
    <property type="match status" value="1"/>
</dbReference>
<dbReference type="SUPFAM" id="SSF109998">
    <property type="entry name" value="Triger factor/SurA peptide-binding domain-like"/>
    <property type="match status" value="1"/>
</dbReference>
<dbReference type="SUPFAM" id="SSF102735">
    <property type="entry name" value="Trigger factor ribosome-binding domain"/>
    <property type="match status" value="1"/>
</dbReference>
<dbReference type="PROSITE" id="PS50059">
    <property type="entry name" value="FKBP_PPIASE"/>
    <property type="match status" value="1"/>
</dbReference>
<proteinExistence type="inferred from homology"/>
<organism>
    <name type="scientific">Staphylococcus saprophyticus subsp. saprophyticus (strain ATCC 15305 / DSM 20229 / NCIMB 8711 / NCTC 7292 / S-41)</name>
    <dbReference type="NCBI Taxonomy" id="342451"/>
    <lineage>
        <taxon>Bacteria</taxon>
        <taxon>Bacillati</taxon>
        <taxon>Bacillota</taxon>
        <taxon>Bacilli</taxon>
        <taxon>Bacillales</taxon>
        <taxon>Staphylococcaceae</taxon>
        <taxon>Staphylococcus</taxon>
    </lineage>
</organism>
<keyword id="KW-0131">Cell cycle</keyword>
<keyword id="KW-0132">Cell division</keyword>
<keyword id="KW-0143">Chaperone</keyword>
<keyword id="KW-0963">Cytoplasm</keyword>
<keyword id="KW-0413">Isomerase</keyword>
<keyword id="KW-1185">Reference proteome</keyword>
<keyword id="KW-0697">Rotamase</keyword>
<evidence type="ECO:0000255" key="1">
    <source>
        <dbReference type="HAMAP-Rule" id="MF_00303"/>
    </source>
</evidence>
<comment type="function">
    <text evidence="1">Involved in protein export. Acts as a chaperone by maintaining the newly synthesized protein in an open conformation. Functions as a peptidyl-prolyl cis-trans isomerase.</text>
</comment>
<comment type="catalytic activity">
    <reaction evidence="1">
        <text>[protein]-peptidylproline (omega=180) = [protein]-peptidylproline (omega=0)</text>
        <dbReference type="Rhea" id="RHEA:16237"/>
        <dbReference type="Rhea" id="RHEA-COMP:10747"/>
        <dbReference type="Rhea" id="RHEA-COMP:10748"/>
        <dbReference type="ChEBI" id="CHEBI:83833"/>
        <dbReference type="ChEBI" id="CHEBI:83834"/>
        <dbReference type="EC" id="5.2.1.8"/>
    </reaction>
</comment>
<comment type="subcellular location">
    <subcellularLocation>
        <location>Cytoplasm</location>
    </subcellularLocation>
    <text evidence="1">About half TF is bound to the ribosome near the polypeptide exit tunnel while the other half is free in the cytoplasm.</text>
</comment>
<comment type="domain">
    <text evidence="1">Consists of 3 domains; the N-terminus binds the ribosome, the middle domain has PPIase activity, while the C-terminus has intrinsic chaperone activity on its own.</text>
</comment>
<comment type="similarity">
    <text evidence="1">Belongs to the FKBP-type PPIase family. Tig subfamily.</text>
</comment>
<protein>
    <recommendedName>
        <fullName evidence="1">Trigger factor</fullName>
        <shortName evidence="1">TF</shortName>
        <ecNumber evidence="1">5.2.1.8</ecNumber>
    </recommendedName>
    <alternativeName>
        <fullName evidence="1">PPIase</fullName>
    </alternativeName>
</protein>